<proteinExistence type="evidence at transcript level"/>
<name>MYB20_ARATH</name>
<protein>
    <recommendedName>
        <fullName evidence="5">Transcription factor MYB20</fullName>
    </recommendedName>
    <alternativeName>
        <fullName evidence="4">Myb-related protein 20</fullName>
        <shortName evidence="3">AtMYB20</shortName>
    </alternativeName>
</protein>
<reference key="1">
    <citation type="submission" date="2004-01" db="EMBL/GenBank/DDBJ databases">
        <title>The MYB transcription factor family in Arabidopsis: a genome-wide cloning and expression pattern analysis.</title>
        <authorList>
            <person name="Qu L."/>
            <person name="Gu H."/>
        </authorList>
    </citation>
    <scope>NUCLEOTIDE SEQUENCE [MRNA]</scope>
</reference>
<reference key="2">
    <citation type="journal article" date="2006" name="Plant Mol. Biol.">
        <title>The MYB transcription factor superfamily of Arabidopsis: expression analysis and phylogenetic comparison with the rice MYB family.</title>
        <authorList>
            <person name="Chen Y."/>
            <person name="Yang X."/>
            <person name="He K."/>
            <person name="Liu M."/>
            <person name="Li J."/>
            <person name="Gao Z."/>
            <person name="Lin Z."/>
            <person name="Zhang Y."/>
            <person name="Wang X."/>
            <person name="Qiu X."/>
            <person name="Shen Y."/>
            <person name="Zhang L."/>
            <person name="Deng X."/>
            <person name="Luo J."/>
            <person name="Deng X.-W."/>
            <person name="Chen Z."/>
            <person name="Gu H."/>
            <person name="Qu L.-J."/>
        </authorList>
    </citation>
    <scope>NUCLEOTIDE SEQUENCE [MRNA]</scope>
</reference>
<reference key="3">
    <citation type="journal article" date="2000" name="Nature">
        <title>Sequence and analysis of chromosome 1 of the plant Arabidopsis thaliana.</title>
        <authorList>
            <person name="Theologis A."/>
            <person name="Ecker J.R."/>
            <person name="Palm C.J."/>
            <person name="Federspiel N.A."/>
            <person name="Kaul S."/>
            <person name="White O."/>
            <person name="Alonso J."/>
            <person name="Altafi H."/>
            <person name="Araujo R."/>
            <person name="Bowman C.L."/>
            <person name="Brooks S.Y."/>
            <person name="Buehler E."/>
            <person name="Chan A."/>
            <person name="Chao Q."/>
            <person name="Chen H."/>
            <person name="Cheuk R.F."/>
            <person name="Chin C.W."/>
            <person name="Chung M.K."/>
            <person name="Conn L."/>
            <person name="Conway A.B."/>
            <person name="Conway A.R."/>
            <person name="Creasy T.H."/>
            <person name="Dewar K."/>
            <person name="Dunn P."/>
            <person name="Etgu P."/>
            <person name="Feldblyum T.V."/>
            <person name="Feng J.-D."/>
            <person name="Fong B."/>
            <person name="Fujii C.Y."/>
            <person name="Gill J.E."/>
            <person name="Goldsmith A.D."/>
            <person name="Haas B."/>
            <person name="Hansen N.F."/>
            <person name="Hughes B."/>
            <person name="Huizar L."/>
            <person name="Hunter J.L."/>
            <person name="Jenkins J."/>
            <person name="Johnson-Hopson C."/>
            <person name="Khan S."/>
            <person name="Khaykin E."/>
            <person name="Kim C.J."/>
            <person name="Koo H.L."/>
            <person name="Kremenetskaia I."/>
            <person name="Kurtz D.B."/>
            <person name="Kwan A."/>
            <person name="Lam B."/>
            <person name="Langin-Hooper S."/>
            <person name="Lee A."/>
            <person name="Lee J.M."/>
            <person name="Lenz C.A."/>
            <person name="Li J.H."/>
            <person name="Li Y.-P."/>
            <person name="Lin X."/>
            <person name="Liu S.X."/>
            <person name="Liu Z.A."/>
            <person name="Luros J.S."/>
            <person name="Maiti R."/>
            <person name="Marziali A."/>
            <person name="Militscher J."/>
            <person name="Miranda M."/>
            <person name="Nguyen M."/>
            <person name="Nierman W.C."/>
            <person name="Osborne B.I."/>
            <person name="Pai G."/>
            <person name="Peterson J."/>
            <person name="Pham P.K."/>
            <person name="Rizzo M."/>
            <person name="Rooney T."/>
            <person name="Rowley D."/>
            <person name="Sakano H."/>
            <person name="Salzberg S.L."/>
            <person name="Schwartz J.R."/>
            <person name="Shinn P."/>
            <person name="Southwick A.M."/>
            <person name="Sun H."/>
            <person name="Tallon L.J."/>
            <person name="Tambunga G."/>
            <person name="Toriumi M.J."/>
            <person name="Town C.D."/>
            <person name="Utterback T."/>
            <person name="Van Aken S."/>
            <person name="Vaysberg M."/>
            <person name="Vysotskaia V.S."/>
            <person name="Walker M."/>
            <person name="Wu D."/>
            <person name="Yu G."/>
            <person name="Fraser C.M."/>
            <person name="Venter J.C."/>
            <person name="Davis R.W."/>
        </authorList>
    </citation>
    <scope>NUCLEOTIDE SEQUENCE [LARGE SCALE GENOMIC DNA]</scope>
    <source>
        <strain>cv. Columbia</strain>
    </source>
</reference>
<reference key="4">
    <citation type="journal article" date="2017" name="Plant J.">
        <title>Araport11: a complete reannotation of the Arabidopsis thaliana reference genome.</title>
        <authorList>
            <person name="Cheng C.Y."/>
            <person name="Krishnakumar V."/>
            <person name="Chan A.P."/>
            <person name="Thibaud-Nissen F."/>
            <person name="Schobel S."/>
            <person name="Town C.D."/>
        </authorList>
    </citation>
    <scope>GENOME REANNOTATION</scope>
    <source>
        <strain>cv. Columbia</strain>
    </source>
</reference>
<reference key="5">
    <citation type="submission" date="2006-09" db="EMBL/GenBank/DDBJ databases">
        <title>Arabidopsis ORF Clones.</title>
        <authorList>
            <person name="Bautista V.R."/>
            <person name="Kim C.J."/>
            <person name="Chen H."/>
            <person name="Quinitio C."/>
            <person name="Ecker J.R."/>
        </authorList>
    </citation>
    <scope>NUCLEOTIDE SEQUENCE [LARGE SCALE MRNA]</scope>
    <source>
        <strain>cv. Columbia</strain>
    </source>
</reference>
<reference key="6">
    <citation type="journal article" date="1998" name="Plant J.">
        <title>Towards functional characterisation of the members of the R2R3-MYB gene family from Arabidopsis thaliana.</title>
        <authorList>
            <person name="Kranz H.D."/>
            <person name="Denekamp M."/>
            <person name="Greco R."/>
            <person name="Jin H.-L."/>
            <person name="Leyva A."/>
            <person name="Meissner R.C."/>
            <person name="Petroni K."/>
            <person name="Urzainqui A."/>
            <person name="Bevan M."/>
            <person name="Martin C."/>
            <person name="Smeekens S."/>
            <person name="Tonelli C."/>
            <person name="Paz-Ares J."/>
            <person name="Weisshaar B."/>
        </authorList>
    </citation>
    <scope>NUCLEOTIDE SEQUENCE [MRNA] OF 1-278</scope>
    <source>
        <strain>cv. Columbia</strain>
    </source>
</reference>
<reference key="7">
    <citation type="journal article" date="2001" name="Curr. Opin. Plant Biol.">
        <title>The R2R3-MYB gene family in Arabidopsis thaliana.</title>
        <authorList>
            <person name="Stracke R."/>
            <person name="Werber M."/>
            <person name="Weisshaar B."/>
        </authorList>
    </citation>
    <scope>GENE FAMILY</scope>
    <scope>NOMENCLATURE</scope>
</reference>
<reference key="8">
    <citation type="journal article" date="2013" name="FEBS Lett.">
        <title>An Arabidopsis R2R3-MYB transcription factor, AtMYB20, negatively regulates type 2C serine/threonine protein phosphatases to enhance salt tolerance.</title>
        <authorList>
            <person name="Cui M.H."/>
            <person name="Yoo K.S."/>
            <person name="Hyoung S."/>
            <person name="Nguyen H.T."/>
            <person name="Kim Y.Y."/>
            <person name="Kim H.J."/>
            <person name="Ok S.H."/>
            <person name="Yoo S.D."/>
            <person name="Shin J.S."/>
        </authorList>
    </citation>
    <scope>FUNCTION</scope>
    <scope>SUBCELLULAR LOCATION</scope>
    <scope>TISSUE SPECIFICITY</scope>
    <scope>INDUCTION</scope>
</reference>
<organism>
    <name type="scientific">Arabidopsis thaliana</name>
    <name type="common">Mouse-ear cress</name>
    <dbReference type="NCBI Taxonomy" id="3702"/>
    <lineage>
        <taxon>Eukaryota</taxon>
        <taxon>Viridiplantae</taxon>
        <taxon>Streptophyta</taxon>
        <taxon>Embryophyta</taxon>
        <taxon>Tracheophyta</taxon>
        <taxon>Spermatophyta</taxon>
        <taxon>Magnoliopsida</taxon>
        <taxon>eudicotyledons</taxon>
        <taxon>Gunneridae</taxon>
        <taxon>Pentapetalae</taxon>
        <taxon>rosids</taxon>
        <taxon>malvids</taxon>
        <taxon>Brassicales</taxon>
        <taxon>Brassicaceae</taxon>
        <taxon>Camelineae</taxon>
        <taxon>Arabidopsis</taxon>
    </lineage>
</organism>
<comment type="function">
    <text evidence="2">Transcription factor that acts as a positive regulator of abscisic acid (ABA) signaling in response to salt stress. Acts as a negative regulator ABI1, ABI2 and PP2CA, which are protein phosphatases 2C acting as negative regulator of ABA signaling. Binds to the DNA specific sequence and core element 5'-ACGT-3' found in the promoters of ABI1 and PP2CA to negatively regulate their expression during ABA-dependent salt stress response.</text>
</comment>
<comment type="subcellular location">
    <subcellularLocation>
        <location evidence="1 2">Nucleus</location>
    </subcellularLocation>
</comment>
<comment type="tissue specificity">
    <text evidence="2">Expressed in chalaza of mature seeds, cotyledons, rosette leaves, cauline leaves, veins of stems, mature siliques, sepals and styles. Expressed at low levels in roots.</text>
</comment>
<comment type="induction">
    <text evidence="2">Induced by salt stress, drought stress and abscisic acid (ABA). Down-regulated by salicylic acid (SA) methyl jasmonate (JA).</text>
</comment>
<comment type="miscellaneous">
    <text evidence="2">Plants overexpressing MYB20 display increased tolerance to salt stress.</text>
</comment>
<keyword id="KW-0238">DNA-binding</keyword>
<keyword id="KW-0539">Nucleus</keyword>
<keyword id="KW-1185">Reference proteome</keyword>
<keyword id="KW-0677">Repeat</keyword>
<keyword id="KW-0346">Stress response</keyword>
<keyword id="KW-0804">Transcription</keyword>
<keyword id="KW-0805">Transcription regulation</keyword>
<feature type="chain" id="PRO_0000441920" description="Transcription factor MYB20">
    <location>
        <begin position="1"/>
        <end position="282"/>
    </location>
</feature>
<feature type="domain" description="HTH myb-type 1" evidence="1">
    <location>
        <begin position="9"/>
        <end position="61"/>
    </location>
</feature>
<feature type="domain" description="HTH myb-type 2" evidence="1">
    <location>
        <begin position="62"/>
        <end position="116"/>
    </location>
</feature>
<feature type="DNA-binding region" description="H-T-H motif" evidence="1">
    <location>
        <begin position="37"/>
        <end position="61"/>
    </location>
</feature>
<feature type="DNA-binding region" description="H-T-H motif" evidence="1">
    <location>
        <begin position="89"/>
        <end position="112"/>
    </location>
</feature>
<feature type="sequence conflict" description="In Ref. 6; AAC83591." evidence="5" ref="6">
    <original>K</original>
    <variation>T</variation>
    <location>
        <position position="114"/>
    </location>
</feature>
<feature type="sequence conflict" description="In Ref. 6; AAC83591." evidence="5" ref="6">
    <original>P</original>
    <variation>L</variation>
    <location>
        <position position="123"/>
    </location>
</feature>
<feature type="sequence conflict" description="In Ref. 6; AAC83591." evidence="5" ref="6">
    <original>N</original>
    <variation>S</variation>
    <location>
        <position position="238"/>
    </location>
</feature>
<sequence length="282" mass="32336">MGRQPCCDKVGLKKGPWTAEEDRKLINFILTNGQCCWRAVPKLSGLLRCGKSCRLRWTNYLRPDLKRGLLSDYEEKMVIDLHSQLGNRWSKIASHLPGRTDNEIKNHWNTHIKKKLRKMGIDPLTHKPLSIVEKEDEEPLKKLQNNTVPFQETMERPLENNIKNISRLEESLGDDQFMEINLEYGVEDVPLIETESLDLICSNSTMSSSTSTSSHSSNDSSFLKDLQFPEFEWSDYGNSNNDNNNGVDNIIENNMMSLWEISDFSSLDLLLNDESSSTFGLF</sequence>
<dbReference type="EMBL" id="AY519565">
    <property type="protein sequence ID" value="AAS10035.1"/>
    <property type="molecule type" value="mRNA"/>
</dbReference>
<dbReference type="EMBL" id="AC066691">
    <property type="protein sequence ID" value="AAG51765.1"/>
    <property type="molecule type" value="Genomic_DNA"/>
</dbReference>
<dbReference type="EMBL" id="CP002684">
    <property type="protein sequence ID" value="AEE34479.1"/>
    <property type="molecule type" value="Genomic_DNA"/>
</dbReference>
<dbReference type="EMBL" id="BT028904">
    <property type="protein sequence ID" value="ABI49451.1"/>
    <property type="molecule type" value="mRNA"/>
</dbReference>
<dbReference type="EMBL" id="AF062869">
    <property type="protein sequence ID" value="AAC83591.1"/>
    <property type="molecule type" value="mRNA"/>
</dbReference>
<dbReference type="PIR" id="C96687">
    <property type="entry name" value="C96687"/>
</dbReference>
<dbReference type="PIR" id="T51641">
    <property type="entry name" value="T51641"/>
</dbReference>
<dbReference type="PIR" id="T52282">
    <property type="entry name" value="T52282"/>
</dbReference>
<dbReference type="RefSeq" id="NP_176797.1">
    <property type="nucleotide sequence ID" value="NM_105294.3"/>
</dbReference>
<dbReference type="SMR" id="Q9C7U7"/>
<dbReference type="FunCoup" id="Q9C7U7">
    <property type="interactions" value="6"/>
</dbReference>
<dbReference type="STRING" id="3702.Q9C7U7"/>
<dbReference type="PaxDb" id="3702-AT1G66230.1"/>
<dbReference type="EnsemblPlants" id="AT1G66230.1">
    <property type="protein sequence ID" value="AT1G66230.1"/>
    <property type="gene ID" value="AT1G66230"/>
</dbReference>
<dbReference type="GeneID" id="842938"/>
<dbReference type="Gramene" id="AT1G66230.1">
    <property type="protein sequence ID" value="AT1G66230.1"/>
    <property type="gene ID" value="AT1G66230"/>
</dbReference>
<dbReference type="KEGG" id="ath:AT1G66230"/>
<dbReference type="Araport" id="AT1G66230"/>
<dbReference type="TAIR" id="AT1G66230">
    <property type="gene designation" value="MYB20"/>
</dbReference>
<dbReference type="eggNOG" id="KOG0048">
    <property type="taxonomic scope" value="Eukaryota"/>
</dbReference>
<dbReference type="HOGENOM" id="CLU_028567_20_0_1"/>
<dbReference type="InParanoid" id="Q9C7U7"/>
<dbReference type="OMA" id="ISWINCF"/>
<dbReference type="OrthoDB" id="2143914at2759"/>
<dbReference type="PhylomeDB" id="Q9C7U7"/>
<dbReference type="PRO" id="PR:Q9C7U7"/>
<dbReference type="Proteomes" id="UP000006548">
    <property type="component" value="Chromosome 1"/>
</dbReference>
<dbReference type="ExpressionAtlas" id="Q9C7U7">
    <property type="expression patterns" value="baseline and differential"/>
</dbReference>
<dbReference type="GO" id="GO:0005634">
    <property type="term" value="C:nucleus"/>
    <property type="evidence" value="ECO:0000314"/>
    <property type="project" value="UniProtKB"/>
</dbReference>
<dbReference type="GO" id="GO:0000987">
    <property type="term" value="F:cis-regulatory region sequence-specific DNA binding"/>
    <property type="evidence" value="ECO:0000314"/>
    <property type="project" value="UniProtKB"/>
</dbReference>
<dbReference type="GO" id="GO:0003700">
    <property type="term" value="F:DNA-binding transcription factor activity"/>
    <property type="evidence" value="ECO:0000314"/>
    <property type="project" value="TAIR"/>
</dbReference>
<dbReference type="GO" id="GO:0000976">
    <property type="term" value="F:transcription cis-regulatory region binding"/>
    <property type="evidence" value="ECO:0000353"/>
    <property type="project" value="TAIR"/>
</dbReference>
<dbReference type="GO" id="GO:0009094">
    <property type="term" value="P:L-phenylalanine biosynthetic process"/>
    <property type="evidence" value="ECO:0000316"/>
    <property type="project" value="TAIR"/>
</dbReference>
<dbReference type="GO" id="GO:0045892">
    <property type="term" value="P:negative regulation of DNA-templated transcription"/>
    <property type="evidence" value="ECO:0000315"/>
    <property type="project" value="UniProtKB"/>
</dbReference>
<dbReference type="GO" id="GO:0045893">
    <property type="term" value="P:positive regulation of DNA-templated transcription"/>
    <property type="evidence" value="ECO:0000314"/>
    <property type="project" value="TAIR"/>
</dbReference>
<dbReference type="GO" id="GO:1901002">
    <property type="term" value="P:positive regulation of response to salt stress"/>
    <property type="evidence" value="ECO:0000315"/>
    <property type="project" value="UniProtKB"/>
</dbReference>
<dbReference type="GO" id="GO:1901141">
    <property type="term" value="P:regulation of lignin biosynthetic process"/>
    <property type="evidence" value="ECO:0000316"/>
    <property type="project" value="TAIR"/>
</dbReference>
<dbReference type="GO" id="GO:2000762">
    <property type="term" value="P:regulation of phenylpropanoid metabolic process"/>
    <property type="evidence" value="ECO:0000316"/>
    <property type="project" value="TAIR"/>
</dbReference>
<dbReference type="GO" id="GO:2000652">
    <property type="term" value="P:regulation of secondary cell wall biogenesis"/>
    <property type="evidence" value="ECO:0000315"/>
    <property type="project" value="TAIR"/>
</dbReference>
<dbReference type="CDD" id="cd00167">
    <property type="entry name" value="SANT"/>
    <property type="match status" value="2"/>
</dbReference>
<dbReference type="FunFam" id="1.10.10.60:FF:000069">
    <property type="entry name" value="MYB transcription factor"/>
    <property type="match status" value="1"/>
</dbReference>
<dbReference type="FunFam" id="1.10.10.60:FF:000300">
    <property type="entry name" value="Myb transcription factor"/>
    <property type="match status" value="1"/>
</dbReference>
<dbReference type="Gene3D" id="1.10.10.60">
    <property type="entry name" value="Homeodomain-like"/>
    <property type="match status" value="2"/>
</dbReference>
<dbReference type="InterPro" id="IPR009057">
    <property type="entry name" value="Homeodomain-like_sf"/>
</dbReference>
<dbReference type="InterPro" id="IPR017930">
    <property type="entry name" value="Myb_dom"/>
</dbReference>
<dbReference type="InterPro" id="IPR015495">
    <property type="entry name" value="Myb_TF_plants"/>
</dbReference>
<dbReference type="InterPro" id="IPR001005">
    <property type="entry name" value="SANT/Myb"/>
</dbReference>
<dbReference type="PANTHER" id="PTHR47994">
    <property type="entry name" value="F14D16.11-RELATED"/>
    <property type="match status" value="1"/>
</dbReference>
<dbReference type="PANTHER" id="PTHR47994:SF5">
    <property type="entry name" value="F14D16.11-RELATED"/>
    <property type="match status" value="1"/>
</dbReference>
<dbReference type="Pfam" id="PF00249">
    <property type="entry name" value="Myb_DNA-binding"/>
    <property type="match status" value="2"/>
</dbReference>
<dbReference type="SMART" id="SM00717">
    <property type="entry name" value="SANT"/>
    <property type="match status" value="2"/>
</dbReference>
<dbReference type="SUPFAM" id="SSF46689">
    <property type="entry name" value="Homeodomain-like"/>
    <property type="match status" value="1"/>
</dbReference>
<dbReference type="PROSITE" id="PS51294">
    <property type="entry name" value="HTH_MYB"/>
    <property type="match status" value="2"/>
</dbReference>
<accession>Q9C7U7</accession>
<accession>O49759</accession>
<gene>
    <name evidence="3" type="primary">MYB20</name>
    <name evidence="6" type="ordered locus">At1g66230</name>
    <name evidence="7" type="ORF">T6J19.5</name>
</gene>
<evidence type="ECO:0000255" key="1">
    <source>
        <dbReference type="PROSITE-ProRule" id="PRU00625"/>
    </source>
</evidence>
<evidence type="ECO:0000269" key="2">
    <source>
    </source>
</evidence>
<evidence type="ECO:0000303" key="3">
    <source>
    </source>
</evidence>
<evidence type="ECO:0000303" key="4">
    <source>
    </source>
</evidence>
<evidence type="ECO:0000305" key="5"/>
<evidence type="ECO:0000312" key="6">
    <source>
        <dbReference type="Araport" id="AT1G66230"/>
    </source>
</evidence>
<evidence type="ECO:0000312" key="7">
    <source>
        <dbReference type="EMBL" id="AAG51765.1"/>
    </source>
</evidence>